<feature type="chain" id="PRO_0000260909" description="Large ribosomal subunit protein uL6">
    <location>
        <begin position="1"/>
        <end position="184"/>
    </location>
</feature>
<protein>
    <recommendedName>
        <fullName evidence="1">Large ribosomal subunit protein uL6</fullName>
    </recommendedName>
    <alternativeName>
        <fullName evidence="2">50S ribosomal protein L6</fullName>
    </alternativeName>
</protein>
<accession>Q6YR07</accession>
<proteinExistence type="inferred from homology"/>
<reference key="1">
    <citation type="journal article" date="2004" name="Nat. Genet.">
        <title>Reductive evolution suggested from the complete genome sequence of a plant-pathogenic phytoplasma.</title>
        <authorList>
            <person name="Oshima K."/>
            <person name="Kakizawa S."/>
            <person name="Nishigawa H."/>
            <person name="Jung H.-Y."/>
            <person name="Wei W."/>
            <person name="Suzuki S."/>
            <person name="Arashida R."/>
            <person name="Nakata D."/>
            <person name="Miyata S."/>
            <person name="Ugaki M."/>
            <person name="Namba S."/>
        </authorList>
    </citation>
    <scope>NUCLEOTIDE SEQUENCE [LARGE SCALE GENOMIC DNA]</scope>
    <source>
        <strain>OY-M</strain>
    </source>
</reference>
<keyword id="KW-0687">Ribonucleoprotein</keyword>
<keyword id="KW-0689">Ribosomal protein</keyword>
<keyword id="KW-0694">RNA-binding</keyword>
<keyword id="KW-0699">rRNA-binding</keyword>
<name>RL6_ONYPE</name>
<sequence length="184" mass="20640">MSRVGNKAIEVPNAVKVDIKDRNFISVEGPKGKLEYQFNHRLTITNENKVITVKRPNDEIFMKKIHGTTRALLSNMVEGVSKGFQKTLKIVGLAYRAQIKDKQLILSLGFSHPVSVAIPDNLEVVVNQNTEIVIKGIDKQLVGEFAAKNVKLRKPEPYKGKGIRYVGQYVRQKAGKSAKKTRKD</sequence>
<evidence type="ECO:0000255" key="1">
    <source>
        <dbReference type="HAMAP-Rule" id="MF_01365"/>
    </source>
</evidence>
<evidence type="ECO:0000305" key="2"/>
<gene>
    <name evidence="1" type="primary">rplF</name>
    <name type="ordered locus">PAM_215</name>
</gene>
<comment type="function">
    <text evidence="1">This protein binds to the 23S rRNA, and is important in its secondary structure. It is located near the subunit interface in the base of the L7/L12 stalk, and near the tRNA binding site of the peptidyltransferase center.</text>
</comment>
<comment type="subunit">
    <text evidence="1">Part of the 50S ribosomal subunit.</text>
</comment>
<comment type="similarity">
    <text evidence="1">Belongs to the universal ribosomal protein uL6 family.</text>
</comment>
<dbReference type="EMBL" id="AP006628">
    <property type="protein sequence ID" value="BAD04300.1"/>
    <property type="molecule type" value="Genomic_DNA"/>
</dbReference>
<dbReference type="SMR" id="Q6YR07"/>
<dbReference type="STRING" id="262768.PAM_215"/>
<dbReference type="KEGG" id="poy:PAM_215"/>
<dbReference type="eggNOG" id="COG0097">
    <property type="taxonomic scope" value="Bacteria"/>
</dbReference>
<dbReference type="HOGENOM" id="CLU_065464_1_2_14"/>
<dbReference type="BioCyc" id="OYEL262768:G1G26-261-MONOMER"/>
<dbReference type="Proteomes" id="UP000002523">
    <property type="component" value="Chromosome"/>
</dbReference>
<dbReference type="GO" id="GO:0022625">
    <property type="term" value="C:cytosolic large ribosomal subunit"/>
    <property type="evidence" value="ECO:0007669"/>
    <property type="project" value="TreeGrafter"/>
</dbReference>
<dbReference type="GO" id="GO:0019843">
    <property type="term" value="F:rRNA binding"/>
    <property type="evidence" value="ECO:0007669"/>
    <property type="project" value="UniProtKB-UniRule"/>
</dbReference>
<dbReference type="GO" id="GO:0003735">
    <property type="term" value="F:structural constituent of ribosome"/>
    <property type="evidence" value="ECO:0007669"/>
    <property type="project" value="InterPro"/>
</dbReference>
<dbReference type="GO" id="GO:0002181">
    <property type="term" value="P:cytoplasmic translation"/>
    <property type="evidence" value="ECO:0007669"/>
    <property type="project" value="TreeGrafter"/>
</dbReference>
<dbReference type="FunFam" id="3.90.930.12:FF:000001">
    <property type="entry name" value="50S ribosomal protein L6"/>
    <property type="match status" value="1"/>
</dbReference>
<dbReference type="FunFam" id="3.90.930.12:FF:000002">
    <property type="entry name" value="50S ribosomal protein L6"/>
    <property type="match status" value="1"/>
</dbReference>
<dbReference type="Gene3D" id="3.90.930.12">
    <property type="entry name" value="Ribosomal protein L6, alpha-beta domain"/>
    <property type="match status" value="2"/>
</dbReference>
<dbReference type="HAMAP" id="MF_01365_B">
    <property type="entry name" value="Ribosomal_uL6_B"/>
    <property type="match status" value="1"/>
</dbReference>
<dbReference type="InterPro" id="IPR000702">
    <property type="entry name" value="Ribosomal_uL6-like"/>
</dbReference>
<dbReference type="InterPro" id="IPR036789">
    <property type="entry name" value="Ribosomal_uL6-like_a/b-dom_sf"/>
</dbReference>
<dbReference type="InterPro" id="IPR020040">
    <property type="entry name" value="Ribosomal_uL6_a/b-dom"/>
</dbReference>
<dbReference type="InterPro" id="IPR019906">
    <property type="entry name" value="Ribosomal_uL6_bac-type"/>
</dbReference>
<dbReference type="InterPro" id="IPR002358">
    <property type="entry name" value="Ribosomal_uL6_CS"/>
</dbReference>
<dbReference type="NCBIfam" id="TIGR03654">
    <property type="entry name" value="L6_bact"/>
    <property type="match status" value="1"/>
</dbReference>
<dbReference type="PANTHER" id="PTHR11655">
    <property type="entry name" value="60S/50S RIBOSOMAL PROTEIN L6/L9"/>
    <property type="match status" value="1"/>
</dbReference>
<dbReference type="PANTHER" id="PTHR11655:SF14">
    <property type="entry name" value="LARGE RIBOSOMAL SUBUNIT PROTEIN UL6M"/>
    <property type="match status" value="1"/>
</dbReference>
<dbReference type="Pfam" id="PF00347">
    <property type="entry name" value="Ribosomal_L6"/>
    <property type="match status" value="2"/>
</dbReference>
<dbReference type="PIRSF" id="PIRSF002162">
    <property type="entry name" value="Ribosomal_L6"/>
    <property type="match status" value="1"/>
</dbReference>
<dbReference type="PRINTS" id="PR00059">
    <property type="entry name" value="RIBOSOMALL6"/>
</dbReference>
<dbReference type="SUPFAM" id="SSF56053">
    <property type="entry name" value="Ribosomal protein L6"/>
    <property type="match status" value="2"/>
</dbReference>
<dbReference type="PROSITE" id="PS00525">
    <property type="entry name" value="RIBOSOMAL_L6_1"/>
    <property type="match status" value="1"/>
</dbReference>
<organism>
    <name type="scientific">Onion yellows phytoplasma (strain OY-M)</name>
    <dbReference type="NCBI Taxonomy" id="262768"/>
    <lineage>
        <taxon>Bacteria</taxon>
        <taxon>Bacillati</taxon>
        <taxon>Mycoplasmatota</taxon>
        <taxon>Mollicutes</taxon>
        <taxon>Acholeplasmatales</taxon>
        <taxon>Acholeplasmataceae</taxon>
        <taxon>Candidatus Phytoplasma</taxon>
        <taxon>16SrI (Aster yellows group)</taxon>
    </lineage>
</organism>